<gene>
    <name type="primary">coro2b</name>
    <name type="ORF">TEgg100f23.1</name>
</gene>
<evidence type="ECO:0000250" key="1"/>
<evidence type="ECO:0000255" key="2"/>
<evidence type="ECO:0000303" key="3">
    <source ref="1"/>
</evidence>
<evidence type="ECO:0000305" key="4"/>
<comment type="function">
    <text evidence="1">May play a role in the reorganization of neuronal actin structure.</text>
</comment>
<comment type="subcellular location">
    <subcellularLocation>
        <location evidence="1">Cytoplasm</location>
        <location evidence="1">Cytoskeleton</location>
    </subcellularLocation>
</comment>
<comment type="alternative products">
    <event type="alternative splicing"/>
    <isoform>
        <id>A8WGE3-1</id>
        <name>1</name>
        <sequence type="displayed"/>
    </isoform>
    <isoform>
        <id>A8WGE3-2</id>
        <name>2</name>
        <sequence type="described" ref="VSP_037707"/>
    </isoform>
</comment>
<comment type="similarity">
    <text evidence="4">Belongs to the WD repeat coronin family.</text>
</comment>
<reference key="1">
    <citation type="submission" date="2006-10" db="EMBL/GenBank/DDBJ databases">
        <authorList>
            <consortium name="Sanger Xenopus tropicalis EST/cDNA project"/>
        </authorList>
    </citation>
    <scope>NUCLEOTIDE SEQUENCE [LARGE SCALE MRNA] (ISOFORM 2)</scope>
    <source>
        <tissue>Egg</tissue>
    </source>
</reference>
<reference key="2">
    <citation type="submission" date="2007-11" db="EMBL/GenBank/DDBJ databases">
        <authorList>
            <consortium name="NIH - Xenopus Gene Collection (XGC) project"/>
        </authorList>
    </citation>
    <scope>NUCLEOTIDE SEQUENCE [LARGE SCALE MRNA] (ISOFORM 1)</scope>
    <source>
        <tissue>Brain</tissue>
    </source>
</reference>
<name>COR2B_XENTR</name>
<proteinExistence type="evidence at transcript level"/>
<organism>
    <name type="scientific">Xenopus tropicalis</name>
    <name type="common">Western clawed frog</name>
    <name type="synonym">Silurana tropicalis</name>
    <dbReference type="NCBI Taxonomy" id="8364"/>
    <lineage>
        <taxon>Eukaryota</taxon>
        <taxon>Metazoa</taxon>
        <taxon>Chordata</taxon>
        <taxon>Craniata</taxon>
        <taxon>Vertebrata</taxon>
        <taxon>Euteleostomi</taxon>
        <taxon>Amphibia</taxon>
        <taxon>Batrachia</taxon>
        <taxon>Anura</taxon>
        <taxon>Pipoidea</taxon>
        <taxon>Pipidae</taxon>
        <taxon>Xenopodinae</taxon>
        <taxon>Xenopus</taxon>
        <taxon>Silurana</taxon>
    </lineage>
</organism>
<accession>A8WGE3</accession>
<accession>Q28E22</accession>
<keyword id="KW-0009">Actin-binding</keyword>
<keyword id="KW-0025">Alternative splicing</keyword>
<keyword id="KW-0175">Coiled coil</keyword>
<keyword id="KW-0963">Cytoplasm</keyword>
<keyword id="KW-0206">Cytoskeleton</keyword>
<keyword id="KW-1185">Reference proteome</keyword>
<keyword id="KW-0677">Repeat</keyword>
<keyword id="KW-0853">WD repeat</keyword>
<feature type="chain" id="PRO_0000379779" description="Coronin-2B">
    <location>
        <begin position="1"/>
        <end position="480"/>
    </location>
</feature>
<feature type="repeat" description="WD 1">
    <location>
        <begin position="85"/>
        <end position="125"/>
    </location>
</feature>
<feature type="repeat" description="WD 2">
    <location>
        <begin position="135"/>
        <end position="177"/>
    </location>
</feature>
<feature type="repeat" description="WD 3">
    <location>
        <begin position="179"/>
        <end position="217"/>
    </location>
</feature>
<feature type="repeat" description="WD 4">
    <location>
        <begin position="220"/>
        <end position="263"/>
    </location>
</feature>
<feature type="repeat" description="WD 5">
    <location>
        <begin position="265"/>
        <end position="308"/>
    </location>
</feature>
<feature type="coiled-coil region" evidence="2">
    <location>
        <begin position="436"/>
        <end position="475"/>
    </location>
</feature>
<feature type="splice variant" id="VSP_037707" description="In isoform 2." evidence="3">
    <original>MTVTKM</original>
    <variation>M</variation>
    <location>
        <begin position="1"/>
        <end position="6"/>
    </location>
</feature>
<protein>
    <recommendedName>
        <fullName>Coronin-2B</fullName>
    </recommendedName>
</protein>
<dbReference type="EMBL" id="CR848488">
    <property type="protein sequence ID" value="CAJ81788.1"/>
    <property type="molecule type" value="mRNA"/>
</dbReference>
<dbReference type="EMBL" id="BC154677">
    <property type="protein sequence ID" value="AAI54678.1"/>
    <property type="molecule type" value="mRNA"/>
</dbReference>
<dbReference type="RefSeq" id="NP_001016965.1">
    <molecule id="A8WGE3-2"/>
    <property type="nucleotide sequence ID" value="NM_001016965.2"/>
</dbReference>
<dbReference type="RefSeq" id="XP_012814524.1">
    <molecule id="A8WGE3-1"/>
    <property type="nucleotide sequence ID" value="XM_012959070.3"/>
</dbReference>
<dbReference type="RefSeq" id="XP_012814525.1">
    <molecule id="A8WGE3-2"/>
    <property type="nucleotide sequence ID" value="XM_012959071.3"/>
</dbReference>
<dbReference type="RefSeq" id="XP_012814526.1">
    <molecule id="A8WGE3-2"/>
    <property type="nucleotide sequence ID" value="XM_012959072.3"/>
</dbReference>
<dbReference type="SMR" id="A8WGE3"/>
<dbReference type="FunCoup" id="A8WGE3">
    <property type="interactions" value="93"/>
</dbReference>
<dbReference type="STRING" id="8364.ENSXETP00000008542"/>
<dbReference type="PaxDb" id="8364-ENSXETP00000017076"/>
<dbReference type="GeneID" id="549719"/>
<dbReference type="KEGG" id="xtr:549719"/>
<dbReference type="AGR" id="Xenbase:XB-GENE-1014762"/>
<dbReference type="CTD" id="10391"/>
<dbReference type="Xenbase" id="XB-GENE-1014762">
    <property type="gene designation" value="coro2b"/>
</dbReference>
<dbReference type="eggNOG" id="KOG0303">
    <property type="taxonomic scope" value="Eukaryota"/>
</dbReference>
<dbReference type="HOGENOM" id="CLU_026859_4_0_1"/>
<dbReference type="InParanoid" id="A8WGE3"/>
<dbReference type="OMA" id="EREMAIW"/>
<dbReference type="OrthoDB" id="1850764at2759"/>
<dbReference type="Proteomes" id="UP000008143">
    <property type="component" value="Chromosome 3"/>
</dbReference>
<dbReference type="Bgee" id="ENSXETG00000025308">
    <property type="expression patterns" value="Expressed in brain and 11 other cell types or tissues"/>
</dbReference>
<dbReference type="GO" id="GO:0005737">
    <property type="term" value="C:cytoplasm"/>
    <property type="evidence" value="ECO:0007669"/>
    <property type="project" value="UniProtKB-KW"/>
</dbReference>
<dbReference type="GO" id="GO:0005856">
    <property type="term" value="C:cytoskeleton"/>
    <property type="evidence" value="ECO:0007669"/>
    <property type="project" value="UniProtKB-SubCell"/>
</dbReference>
<dbReference type="GO" id="GO:0003779">
    <property type="term" value="F:actin binding"/>
    <property type="evidence" value="ECO:0007669"/>
    <property type="project" value="UniProtKB-KW"/>
</dbReference>
<dbReference type="FunFam" id="2.130.10.10:FF:000053">
    <property type="entry name" value="Coronin"/>
    <property type="match status" value="1"/>
</dbReference>
<dbReference type="Gene3D" id="2.130.10.10">
    <property type="entry name" value="YVTN repeat-like/Quinoprotein amine dehydrogenase"/>
    <property type="match status" value="1"/>
</dbReference>
<dbReference type="InterPro" id="IPR015505">
    <property type="entry name" value="Coronin"/>
</dbReference>
<dbReference type="InterPro" id="IPR015048">
    <property type="entry name" value="DUF1899"/>
</dbReference>
<dbReference type="InterPro" id="IPR015943">
    <property type="entry name" value="WD40/YVTN_repeat-like_dom_sf"/>
</dbReference>
<dbReference type="InterPro" id="IPR019775">
    <property type="entry name" value="WD40_repeat_CS"/>
</dbReference>
<dbReference type="InterPro" id="IPR036322">
    <property type="entry name" value="WD40_repeat_dom_sf"/>
</dbReference>
<dbReference type="InterPro" id="IPR001680">
    <property type="entry name" value="WD40_rpt"/>
</dbReference>
<dbReference type="PANTHER" id="PTHR10856">
    <property type="entry name" value="CORONIN"/>
    <property type="match status" value="1"/>
</dbReference>
<dbReference type="PANTHER" id="PTHR10856:SF17">
    <property type="entry name" value="CORONIN-2B"/>
    <property type="match status" value="1"/>
</dbReference>
<dbReference type="Pfam" id="PF08953">
    <property type="entry name" value="DUF1899"/>
    <property type="match status" value="1"/>
</dbReference>
<dbReference type="Pfam" id="PF00400">
    <property type="entry name" value="WD40"/>
    <property type="match status" value="2"/>
</dbReference>
<dbReference type="Pfam" id="PF16300">
    <property type="entry name" value="WD40_4"/>
    <property type="match status" value="1"/>
</dbReference>
<dbReference type="SMART" id="SM01166">
    <property type="entry name" value="DUF1899"/>
    <property type="match status" value="1"/>
</dbReference>
<dbReference type="SMART" id="SM01167">
    <property type="entry name" value="DUF1900"/>
    <property type="match status" value="1"/>
</dbReference>
<dbReference type="SMART" id="SM00320">
    <property type="entry name" value="WD40"/>
    <property type="match status" value="4"/>
</dbReference>
<dbReference type="SUPFAM" id="SSF50978">
    <property type="entry name" value="WD40 repeat-like"/>
    <property type="match status" value="1"/>
</dbReference>
<dbReference type="PROSITE" id="PS00678">
    <property type="entry name" value="WD_REPEATS_1"/>
    <property type="match status" value="2"/>
</dbReference>
<dbReference type="PROSITE" id="PS50082">
    <property type="entry name" value="WD_REPEATS_2"/>
    <property type="match status" value="3"/>
</dbReference>
<dbReference type="PROSITE" id="PS50294">
    <property type="entry name" value="WD_REPEATS_REGION"/>
    <property type="match status" value="1"/>
</dbReference>
<sequence length="480" mass="55109">MTVTKMSWRPQYRCSKFRNVYGKVASRENCYDCIPITKNVHDNHFCAVNPKFLAIVTETAGGGSFLVIPLQQTGRIEPNYPKVCGHQGTVLDIKWNPFIENIIASCSEDTSVRIWEIPDGGLKRNMSEAVLELYGHSRRVGLIEWHPTAINILFSAGYDYKILIWNLDIGEAVKMIDCHRDVILCMSFNTDGSLLATTCKDKKLRVLEPRSGRVLQETACKTHKVTRVVFLGDMKRLFTTGVSKWNTRQMALWDQEDLSMPVTEEEIDGLSGLLFPFYDADTHMLYLAGKGDGNIRYYEITAEKPYLTYLMEFRSPAPQKGLGVMPKHGLDVSACEIFRFYKLITLKNQIEPISMIVPRRSENYQEDIYPMTSGTEPALRPEEWLRGVNKGPVLMSLKEGYRKENKAIFIAPVKEKKSLVVNGIDLLENVPPRTENELLRMFFRQQEEIRRLKEQLSQRDLLVRQLELELKNLRNSPKDS</sequence>